<organism>
    <name type="scientific">Escherichia coli (strain UTI89 / UPEC)</name>
    <dbReference type="NCBI Taxonomy" id="364106"/>
    <lineage>
        <taxon>Bacteria</taxon>
        <taxon>Pseudomonadati</taxon>
        <taxon>Pseudomonadota</taxon>
        <taxon>Gammaproteobacteria</taxon>
        <taxon>Enterobacterales</taxon>
        <taxon>Enterobacteriaceae</taxon>
        <taxon>Escherichia</taxon>
    </lineage>
</organism>
<proteinExistence type="inferred from homology"/>
<name>TRMJ_ECOUT</name>
<protein>
    <recommendedName>
        <fullName evidence="1">tRNA (cytidine/uridine-2'-O-)-methyltransferase TrmJ</fullName>
        <ecNumber evidence="1">2.1.1.200</ecNumber>
    </recommendedName>
    <alternativeName>
        <fullName evidence="1">tRNA (cytidine(32)/uridine(32)-2'-O)-methyltransferase</fullName>
    </alternativeName>
    <alternativeName>
        <fullName evidence="1">tRNA Cm32/Um32 methyltransferase</fullName>
    </alternativeName>
</protein>
<dbReference type="EC" id="2.1.1.200" evidence="1"/>
<dbReference type="EMBL" id="CP000243">
    <property type="protein sequence ID" value="ABE08314.1"/>
    <property type="molecule type" value="Genomic_DNA"/>
</dbReference>
<dbReference type="RefSeq" id="WP_000940019.1">
    <property type="nucleotide sequence ID" value="NZ_CP064825.1"/>
</dbReference>
<dbReference type="SMR" id="Q1R8K0"/>
<dbReference type="GeneID" id="86860658"/>
<dbReference type="KEGG" id="eci:UTI89_C2854"/>
<dbReference type="HOGENOM" id="CLU_056931_0_1_6"/>
<dbReference type="Proteomes" id="UP000001952">
    <property type="component" value="Chromosome"/>
</dbReference>
<dbReference type="GO" id="GO:0005829">
    <property type="term" value="C:cytosol"/>
    <property type="evidence" value="ECO:0007669"/>
    <property type="project" value="TreeGrafter"/>
</dbReference>
<dbReference type="GO" id="GO:0003723">
    <property type="term" value="F:RNA binding"/>
    <property type="evidence" value="ECO:0007669"/>
    <property type="project" value="InterPro"/>
</dbReference>
<dbReference type="GO" id="GO:0160206">
    <property type="term" value="F:tRNA (cytidine(32)/uridine(32)-2'-O)-methyltransferase activity"/>
    <property type="evidence" value="ECO:0007669"/>
    <property type="project" value="UniProtKB-EC"/>
</dbReference>
<dbReference type="GO" id="GO:0002128">
    <property type="term" value="P:tRNA nucleoside ribose methylation"/>
    <property type="evidence" value="ECO:0007669"/>
    <property type="project" value="TreeGrafter"/>
</dbReference>
<dbReference type="CDD" id="cd18093">
    <property type="entry name" value="SpoU-like_TrmJ"/>
    <property type="match status" value="1"/>
</dbReference>
<dbReference type="FunFam" id="1.10.8.590:FF:000001">
    <property type="entry name" value="tRNA:Cm32/Um32 methyltransferase"/>
    <property type="match status" value="1"/>
</dbReference>
<dbReference type="FunFam" id="3.40.1280.10:FF:000006">
    <property type="entry name" value="Uncharacterized tRNA/rRNA methyltransferase HI_0380"/>
    <property type="match status" value="1"/>
</dbReference>
<dbReference type="Gene3D" id="1.10.8.590">
    <property type="match status" value="1"/>
</dbReference>
<dbReference type="Gene3D" id="3.40.1280.10">
    <property type="match status" value="1"/>
</dbReference>
<dbReference type="InterPro" id="IPR029028">
    <property type="entry name" value="Alpha/beta_knot_MTases"/>
</dbReference>
<dbReference type="InterPro" id="IPR004384">
    <property type="entry name" value="RNA_MeTrfase_TrmJ/LasT"/>
</dbReference>
<dbReference type="InterPro" id="IPR001537">
    <property type="entry name" value="SpoU_MeTrfase"/>
</dbReference>
<dbReference type="InterPro" id="IPR029026">
    <property type="entry name" value="tRNA_m1G_MTases_N"/>
</dbReference>
<dbReference type="NCBIfam" id="NF011694">
    <property type="entry name" value="PRK15114.1"/>
    <property type="match status" value="1"/>
</dbReference>
<dbReference type="NCBIfam" id="TIGR00050">
    <property type="entry name" value="rRNA_methyl_1"/>
    <property type="match status" value="1"/>
</dbReference>
<dbReference type="PANTHER" id="PTHR42786:SF2">
    <property type="entry name" value="TRNA (CYTIDINE_URIDINE-2'-O-)-METHYLTRANSFERASE TRMJ"/>
    <property type="match status" value="1"/>
</dbReference>
<dbReference type="PANTHER" id="PTHR42786">
    <property type="entry name" value="TRNA/RRNA METHYLTRANSFERASE"/>
    <property type="match status" value="1"/>
</dbReference>
<dbReference type="Pfam" id="PF00588">
    <property type="entry name" value="SpoU_methylase"/>
    <property type="match status" value="1"/>
</dbReference>
<dbReference type="PIRSF" id="PIRSF004808">
    <property type="entry name" value="LasT"/>
    <property type="match status" value="1"/>
</dbReference>
<dbReference type="SUPFAM" id="SSF75217">
    <property type="entry name" value="alpha/beta knot"/>
    <property type="match status" value="1"/>
</dbReference>
<gene>
    <name type="primary">trmJ</name>
    <name type="ordered locus">UTI89_C2854</name>
</gene>
<accession>Q1R8K0</accession>
<keyword id="KW-0963">Cytoplasm</keyword>
<keyword id="KW-0489">Methyltransferase</keyword>
<keyword id="KW-0949">S-adenosyl-L-methionine</keyword>
<keyword id="KW-0808">Transferase</keyword>
<keyword id="KW-0819">tRNA processing</keyword>
<feature type="chain" id="PRO_0000313854" description="tRNA (cytidine/uridine-2'-O-)-methyltransferase TrmJ">
    <location>
        <begin position="1"/>
        <end position="246"/>
    </location>
</feature>
<feature type="binding site" evidence="1">
    <location>
        <begin position="79"/>
        <end position="81"/>
    </location>
    <ligand>
        <name>S-adenosyl-L-methionine</name>
        <dbReference type="ChEBI" id="CHEBI:59789"/>
    </ligand>
</feature>
<feature type="binding site" evidence="1">
    <location>
        <position position="114"/>
    </location>
    <ligand>
        <name>S-adenosyl-L-methionine</name>
        <dbReference type="ChEBI" id="CHEBI:59789"/>
    </ligand>
</feature>
<feature type="binding site" evidence="1">
    <location>
        <position position="134"/>
    </location>
    <ligand>
        <name>S-adenosyl-L-methionine</name>
        <dbReference type="ChEBI" id="CHEBI:59789"/>
    </ligand>
</feature>
<feature type="binding site" evidence="1">
    <location>
        <begin position="141"/>
        <end position="143"/>
    </location>
    <ligand>
        <name>S-adenosyl-L-methionine</name>
        <dbReference type="ChEBI" id="CHEBI:59789"/>
    </ligand>
</feature>
<evidence type="ECO:0000250" key="1">
    <source>
        <dbReference type="UniProtKB" id="P0AE01"/>
    </source>
</evidence>
<evidence type="ECO:0000305" key="2"/>
<sequence>MLQNIRIVLVETSHTGNMGSVARAMKTMGLTNLWLVNPLVKPDSQAIALAAGASDVIGNAHIVDTLDEALAGCSLVVGTSARSRTLPWPMLDPRECGLKSVAEAANTPVALVFGRERVGLTNEELQKCHYHVAIAANPEYSSLNLAMAVQVIAYEVRMAWLATQENGEQVEHEETPYPLVDDLERFYGHLEQTLLATGFIRENHPGQVMNKLRRLFTRARPESQELNILRGILASIEQQNKGNKAE</sequence>
<reference key="1">
    <citation type="journal article" date="2006" name="Proc. Natl. Acad. Sci. U.S.A.">
        <title>Identification of genes subject to positive selection in uropathogenic strains of Escherichia coli: a comparative genomics approach.</title>
        <authorList>
            <person name="Chen S.L."/>
            <person name="Hung C.-S."/>
            <person name="Xu J."/>
            <person name="Reigstad C.S."/>
            <person name="Magrini V."/>
            <person name="Sabo A."/>
            <person name="Blasiar D."/>
            <person name="Bieri T."/>
            <person name="Meyer R.R."/>
            <person name="Ozersky P."/>
            <person name="Armstrong J.R."/>
            <person name="Fulton R.S."/>
            <person name="Latreille J.P."/>
            <person name="Spieth J."/>
            <person name="Hooton T.M."/>
            <person name="Mardis E.R."/>
            <person name="Hultgren S.J."/>
            <person name="Gordon J.I."/>
        </authorList>
    </citation>
    <scope>NUCLEOTIDE SEQUENCE [LARGE SCALE GENOMIC DNA]</scope>
    <source>
        <strain>UTI89 / UPEC</strain>
    </source>
</reference>
<comment type="function">
    <text evidence="1">Catalyzes the formation of 2'O-methylated cytidine (Cm32) or 2'O-methylated uridine (Um32) at position 32 in tRNA.</text>
</comment>
<comment type="catalytic activity">
    <reaction evidence="1">
        <text>cytidine(32) in tRNA + S-adenosyl-L-methionine = 2'-O-methylcytidine(32) in tRNA + S-adenosyl-L-homocysteine + H(+)</text>
        <dbReference type="Rhea" id="RHEA:42932"/>
        <dbReference type="Rhea" id="RHEA-COMP:10288"/>
        <dbReference type="Rhea" id="RHEA-COMP:10289"/>
        <dbReference type="ChEBI" id="CHEBI:15378"/>
        <dbReference type="ChEBI" id="CHEBI:57856"/>
        <dbReference type="ChEBI" id="CHEBI:59789"/>
        <dbReference type="ChEBI" id="CHEBI:74495"/>
        <dbReference type="ChEBI" id="CHEBI:82748"/>
        <dbReference type="EC" id="2.1.1.200"/>
    </reaction>
</comment>
<comment type="catalytic activity">
    <reaction evidence="1">
        <text>uridine(32) in tRNA + S-adenosyl-L-methionine = 2'-O-methyluridine(32) in tRNA + S-adenosyl-L-homocysteine + H(+)</text>
        <dbReference type="Rhea" id="RHEA:42936"/>
        <dbReference type="Rhea" id="RHEA-COMP:10107"/>
        <dbReference type="Rhea" id="RHEA-COMP:10290"/>
        <dbReference type="ChEBI" id="CHEBI:15378"/>
        <dbReference type="ChEBI" id="CHEBI:57856"/>
        <dbReference type="ChEBI" id="CHEBI:59789"/>
        <dbReference type="ChEBI" id="CHEBI:65315"/>
        <dbReference type="ChEBI" id="CHEBI:74478"/>
        <dbReference type="EC" id="2.1.1.200"/>
    </reaction>
</comment>
<comment type="subunit">
    <text evidence="1">Homodimer.</text>
</comment>
<comment type="subcellular location">
    <subcellularLocation>
        <location evidence="1">Cytoplasm</location>
    </subcellularLocation>
</comment>
<comment type="similarity">
    <text evidence="2">Belongs to the class IV-like SAM-binding methyltransferase superfamily. RNA methyltransferase TrmH family.</text>
</comment>